<feature type="chain" id="PRO_0000347754" description="Alanine--tRNA ligase">
    <location>
        <begin position="1"/>
        <end position="883"/>
    </location>
</feature>
<feature type="binding site" evidence="1">
    <location>
        <position position="563"/>
    </location>
    <ligand>
        <name>Zn(2+)</name>
        <dbReference type="ChEBI" id="CHEBI:29105"/>
    </ligand>
</feature>
<feature type="binding site" evidence="1">
    <location>
        <position position="567"/>
    </location>
    <ligand>
        <name>Zn(2+)</name>
        <dbReference type="ChEBI" id="CHEBI:29105"/>
    </ligand>
</feature>
<feature type="binding site" evidence="1">
    <location>
        <position position="677"/>
    </location>
    <ligand>
        <name>Zn(2+)</name>
        <dbReference type="ChEBI" id="CHEBI:29105"/>
    </ligand>
</feature>
<feature type="binding site" evidence="1">
    <location>
        <position position="681"/>
    </location>
    <ligand>
        <name>Zn(2+)</name>
        <dbReference type="ChEBI" id="CHEBI:29105"/>
    </ligand>
</feature>
<proteinExistence type="inferred from homology"/>
<comment type="function">
    <text evidence="1">Catalyzes the attachment of alanine to tRNA(Ala) in a two-step reaction: alanine is first activated by ATP to form Ala-AMP and then transferred to the acceptor end of tRNA(Ala). Also edits incorrectly charged Ser-tRNA(Ala) and Gly-tRNA(Ala) via its editing domain.</text>
</comment>
<comment type="catalytic activity">
    <reaction evidence="1">
        <text>tRNA(Ala) + L-alanine + ATP = L-alanyl-tRNA(Ala) + AMP + diphosphate</text>
        <dbReference type="Rhea" id="RHEA:12540"/>
        <dbReference type="Rhea" id="RHEA-COMP:9657"/>
        <dbReference type="Rhea" id="RHEA-COMP:9923"/>
        <dbReference type="ChEBI" id="CHEBI:30616"/>
        <dbReference type="ChEBI" id="CHEBI:33019"/>
        <dbReference type="ChEBI" id="CHEBI:57972"/>
        <dbReference type="ChEBI" id="CHEBI:78442"/>
        <dbReference type="ChEBI" id="CHEBI:78497"/>
        <dbReference type="ChEBI" id="CHEBI:456215"/>
        <dbReference type="EC" id="6.1.1.7"/>
    </reaction>
</comment>
<comment type="cofactor">
    <cofactor evidence="1">
        <name>Zn(2+)</name>
        <dbReference type="ChEBI" id="CHEBI:29105"/>
    </cofactor>
    <text evidence="1">Binds 1 zinc ion per subunit.</text>
</comment>
<comment type="subcellular location">
    <subcellularLocation>
        <location evidence="1">Cytoplasm</location>
    </subcellularLocation>
</comment>
<comment type="domain">
    <text evidence="1">Consists of three domains; the N-terminal catalytic domain, the editing domain and the C-terminal C-Ala domain. The editing domain removes incorrectly charged amino acids, while the C-Ala domain, along with tRNA(Ala), serves as a bridge to cooperatively bring together the editing and aminoacylation centers thus stimulating deacylation of misacylated tRNAs.</text>
</comment>
<comment type="similarity">
    <text evidence="1">Belongs to the class-II aminoacyl-tRNA synthetase family.</text>
</comment>
<organism>
    <name type="scientific">Cereibacter sphaeroides (strain ATCC 17029 / ATH 2.4.9)</name>
    <name type="common">Rhodobacter sphaeroides</name>
    <dbReference type="NCBI Taxonomy" id="349101"/>
    <lineage>
        <taxon>Bacteria</taxon>
        <taxon>Pseudomonadati</taxon>
        <taxon>Pseudomonadota</taxon>
        <taxon>Alphaproteobacteria</taxon>
        <taxon>Rhodobacterales</taxon>
        <taxon>Paracoccaceae</taxon>
        <taxon>Cereibacter</taxon>
    </lineage>
</organism>
<reference key="1">
    <citation type="submission" date="2007-02" db="EMBL/GenBank/DDBJ databases">
        <title>Complete sequence of chromosome 1 of Rhodobacter sphaeroides ATCC 17029.</title>
        <authorList>
            <person name="Copeland A."/>
            <person name="Lucas S."/>
            <person name="Lapidus A."/>
            <person name="Barry K."/>
            <person name="Detter J.C."/>
            <person name="Glavina del Rio T."/>
            <person name="Hammon N."/>
            <person name="Israni S."/>
            <person name="Dalin E."/>
            <person name="Tice H."/>
            <person name="Pitluck S."/>
            <person name="Kiss H."/>
            <person name="Brettin T."/>
            <person name="Bruce D."/>
            <person name="Han C."/>
            <person name="Tapia R."/>
            <person name="Gilna P."/>
            <person name="Schmutz J."/>
            <person name="Larimer F."/>
            <person name="Land M."/>
            <person name="Hauser L."/>
            <person name="Kyrpides N."/>
            <person name="Mikhailova N."/>
            <person name="Richardson P."/>
            <person name="Mackenzie C."/>
            <person name="Choudhary M."/>
            <person name="Donohue T.J."/>
            <person name="Kaplan S."/>
        </authorList>
    </citation>
    <scope>NUCLEOTIDE SEQUENCE [LARGE SCALE GENOMIC DNA]</scope>
    <source>
        <strain>ATCC 17029 / ATH 2.4.9</strain>
    </source>
</reference>
<gene>
    <name evidence="1" type="primary">alaS</name>
    <name type="ordered locus">Rsph17029_2104</name>
</gene>
<keyword id="KW-0030">Aminoacyl-tRNA synthetase</keyword>
<keyword id="KW-0067">ATP-binding</keyword>
<keyword id="KW-0963">Cytoplasm</keyword>
<keyword id="KW-0436">Ligase</keyword>
<keyword id="KW-0479">Metal-binding</keyword>
<keyword id="KW-0547">Nucleotide-binding</keyword>
<keyword id="KW-0648">Protein biosynthesis</keyword>
<keyword id="KW-0694">RNA-binding</keyword>
<keyword id="KW-0820">tRNA-binding</keyword>
<keyword id="KW-0862">Zinc</keyword>
<accession>A3PLJ1</accession>
<evidence type="ECO:0000255" key="1">
    <source>
        <dbReference type="HAMAP-Rule" id="MF_00036"/>
    </source>
</evidence>
<protein>
    <recommendedName>
        <fullName evidence="1">Alanine--tRNA ligase</fullName>
        <ecNumber evidence="1">6.1.1.7</ecNumber>
    </recommendedName>
    <alternativeName>
        <fullName evidence="1">Alanyl-tRNA synthetase</fullName>
        <shortName evidence="1">AlaRS</shortName>
    </alternativeName>
</protein>
<name>SYA_CERS1</name>
<dbReference type="EC" id="6.1.1.7" evidence="1"/>
<dbReference type="EMBL" id="CP000577">
    <property type="protein sequence ID" value="ABN77207.1"/>
    <property type="molecule type" value="Genomic_DNA"/>
</dbReference>
<dbReference type="RefSeq" id="WP_011841442.1">
    <property type="nucleotide sequence ID" value="NC_009049.1"/>
</dbReference>
<dbReference type="SMR" id="A3PLJ1"/>
<dbReference type="KEGG" id="rsh:Rsph17029_2104"/>
<dbReference type="HOGENOM" id="CLU_004485_1_1_5"/>
<dbReference type="GO" id="GO:0005829">
    <property type="term" value="C:cytosol"/>
    <property type="evidence" value="ECO:0007669"/>
    <property type="project" value="TreeGrafter"/>
</dbReference>
<dbReference type="GO" id="GO:0004813">
    <property type="term" value="F:alanine-tRNA ligase activity"/>
    <property type="evidence" value="ECO:0007669"/>
    <property type="project" value="UniProtKB-UniRule"/>
</dbReference>
<dbReference type="GO" id="GO:0002161">
    <property type="term" value="F:aminoacyl-tRNA deacylase activity"/>
    <property type="evidence" value="ECO:0007669"/>
    <property type="project" value="TreeGrafter"/>
</dbReference>
<dbReference type="GO" id="GO:0005524">
    <property type="term" value="F:ATP binding"/>
    <property type="evidence" value="ECO:0007669"/>
    <property type="project" value="UniProtKB-UniRule"/>
</dbReference>
<dbReference type="GO" id="GO:0000049">
    <property type="term" value="F:tRNA binding"/>
    <property type="evidence" value="ECO:0007669"/>
    <property type="project" value="UniProtKB-KW"/>
</dbReference>
<dbReference type="GO" id="GO:0008270">
    <property type="term" value="F:zinc ion binding"/>
    <property type="evidence" value="ECO:0007669"/>
    <property type="project" value="UniProtKB-UniRule"/>
</dbReference>
<dbReference type="GO" id="GO:0006419">
    <property type="term" value="P:alanyl-tRNA aminoacylation"/>
    <property type="evidence" value="ECO:0007669"/>
    <property type="project" value="UniProtKB-UniRule"/>
</dbReference>
<dbReference type="GO" id="GO:0045892">
    <property type="term" value="P:negative regulation of DNA-templated transcription"/>
    <property type="evidence" value="ECO:0007669"/>
    <property type="project" value="TreeGrafter"/>
</dbReference>
<dbReference type="CDD" id="cd00673">
    <property type="entry name" value="AlaRS_core"/>
    <property type="match status" value="1"/>
</dbReference>
<dbReference type="FunFam" id="2.40.30.130:FF:000001">
    <property type="entry name" value="Alanine--tRNA ligase"/>
    <property type="match status" value="1"/>
</dbReference>
<dbReference type="FunFam" id="3.10.310.40:FF:000001">
    <property type="entry name" value="Alanine--tRNA ligase"/>
    <property type="match status" value="1"/>
</dbReference>
<dbReference type="FunFam" id="3.30.54.20:FF:000001">
    <property type="entry name" value="Alanine--tRNA ligase"/>
    <property type="match status" value="1"/>
</dbReference>
<dbReference type="FunFam" id="3.30.930.10:FF:000004">
    <property type="entry name" value="Alanine--tRNA ligase"/>
    <property type="match status" value="1"/>
</dbReference>
<dbReference type="FunFam" id="3.30.980.10:FF:000004">
    <property type="entry name" value="Alanine--tRNA ligase, cytoplasmic"/>
    <property type="match status" value="1"/>
</dbReference>
<dbReference type="Gene3D" id="2.40.30.130">
    <property type="match status" value="1"/>
</dbReference>
<dbReference type="Gene3D" id="3.10.310.40">
    <property type="match status" value="1"/>
</dbReference>
<dbReference type="Gene3D" id="3.30.54.20">
    <property type="match status" value="1"/>
</dbReference>
<dbReference type="Gene3D" id="6.10.250.550">
    <property type="match status" value="1"/>
</dbReference>
<dbReference type="Gene3D" id="3.30.930.10">
    <property type="entry name" value="Bira Bifunctional Protein, Domain 2"/>
    <property type="match status" value="1"/>
</dbReference>
<dbReference type="Gene3D" id="3.30.980.10">
    <property type="entry name" value="Threonyl-trna Synthetase, Chain A, domain 2"/>
    <property type="match status" value="1"/>
</dbReference>
<dbReference type="HAMAP" id="MF_00036_B">
    <property type="entry name" value="Ala_tRNA_synth_B"/>
    <property type="match status" value="1"/>
</dbReference>
<dbReference type="InterPro" id="IPR045864">
    <property type="entry name" value="aa-tRNA-synth_II/BPL/LPL"/>
</dbReference>
<dbReference type="InterPro" id="IPR002318">
    <property type="entry name" value="Ala-tRNA-lgiase_IIc"/>
</dbReference>
<dbReference type="InterPro" id="IPR018162">
    <property type="entry name" value="Ala-tRNA-ligase_IIc_anticod-bd"/>
</dbReference>
<dbReference type="InterPro" id="IPR018165">
    <property type="entry name" value="Ala-tRNA-synth_IIc_core"/>
</dbReference>
<dbReference type="InterPro" id="IPR018164">
    <property type="entry name" value="Ala-tRNA-synth_IIc_N"/>
</dbReference>
<dbReference type="InterPro" id="IPR050058">
    <property type="entry name" value="Ala-tRNA_ligase"/>
</dbReference>
<dbReference type="InterPro" id="IPR023033">
    <property type="entry name" value="Ala_tRNA_ligase_euk/bac"/>
</dbReference>
<dbReference type="InterPro" id="IPR003156">
    <property type="entry name" value="DHHA1_dom"/>
</dbReference>
<dbReference type="InterPro" id="IPR018163">
    <property type="entry name" value="Thr/Ala-tRNA-synth_IIc_edit"/>
</dbReference>
<dbReference type="InterPro" id="IPR009000">
    <property type="entry name" value="Transl_B-barrel_sf"/>
</dbReference>
<dbReference type="InterPro" id="IPR012947">
    <property type="entry name" value="tRNA_SAD"/>
</dbReference>
<dbReference type="NCBIfam" id="TIGR00344">
    <property type="entry name" value="alaS"/>
    <property type="match status" value="1"/>
</dbReference>
<dbReference type="PANTHER" id="PTHR11777:SF9">
    <property type="entry name" value="ALANINE--TRNA LIGASE, CYTOPLASMIC"/>
    <property type="match status" value="1"/>
</dbReference>
<dbReference type="PANTHER" id="PTHR11777">
    <property type="entry name" value="ALANYL-TRNA SYNTHETASE"/>
    <property type="match status" value="1"/>
</dbReference>
<dbReference type="Pfam" id="PF02272">
    <property type="entry name" value="DHHA1"/>
    <property type="match status" value="1"/>
</dbReference>
<dbReference type="Pfam" id="PF01411">
    <property type="entry name" value="tRNA-synt_2c"/>
    <property type="match status" value="1"/>
</dbReference>
<dbReference type="Pfam" id="PF07973">
    <property type="entry name" value="tRNA_SAD"/>
    <property type="match status" value="1"/>
</dbReference>
<dbReference type="PRINTS" id="PR00980">
    <property type="entry name" value="TRNASYNTHALA"/>
</dbReference>
<dbReference type="SMART" id="SM00863">
    <property type="entry name" value="tRNA_SAD"/>
    <property type="match status" value="1"/>
</dbReference>
<dbReference type="SUPFAM" id="SSF55681">
    <property type="entry name" value="Class II aaRS and biotin synthetases"/>
    <property type="match status" value="1"/>
</dbReference>
<dbReference type="SUPFAM" id="SSF101353">
    <property type="entry name" value="Putative anticodon-binding domain of alanyl-tRNA synthetase (AlaRS)"/>
    <property type="match status" value="1"/>
</dbReference>
<dbReference type="SUPFAM" id="SSF55186">
    <property type="entry name" value="ThrRS/AlaRS common domain"/>
    <property type="match status" value="1"/>
</dbReference>
<dbReference type="SUPFAM" id="SSF50447">
    <property type="entry name" value="Translation proteins"/>
    <property type="match status" value="1"/>
</dbReference>
<dbReference type="PROSITE" id="PS50860">
    <property type="entry name" value="AA_TRNA_LIGASE_II_ALA"/>
    <property type="match status" value="1"/>
</dbReference>
<sequence>MPSLNDIRSTFLDYFRRNGHRVVESSPLVPRNDPTLMFTNSGMVQFKNCFTGLEHRDYTRATTAQKCVRAGGKHNDLDNVGYTARHHTFFEMLGNFSFGDYFKSDAIPFAWELLTKDFDIPKEKLLVTVYHTDHEAAEIWKKVAGLPDERIIRIPTNDNFWMMGPTGPCGPCTEIFFDHGPSIWGGPPGSADEDGDRFIEIWNLVFMQNEQHPDGSMTPLPKQSIDTGMGLERIGALLQGKHDNYDTDLMRSLIEASAHATSTDPDGPGKTHHRVIADHLRSTSFLIADGVMPSNEGRGYVLRRIMRRAMRHAHLLGAQDPVMHRLVPALVRQMGAAYPELTRGQALIEETLKLEETRFRQTLERGLRLLEDELGHLPEGSPLPGEAAFKLYDTYGFPLDLTQDALREKGRKVDVEGFEAAMAEQKAKARASWSGSGETKDAAIWFDLAETHGATEFLGYDTEQAEGQVLALVAAGAETASVGVGQTVQIILNQTPFYAESGGQVGDTGELRTDTGRARITDVKKGQGLFLHFAEVVEGEIRQGQGATLVVDHARRSAIRANHSATHLLHEALRRALGDHVAQRGSLNAPDRLRFDFSHSRALSPEELAAVEAEVNGFIRSNGAVETRIMSPDDARALGAQALFGEKYGDEVRVVSMGTLAGSGKGTDGQTYSLELCGGTHVSRLGDIGLCVILGDSASSAGVRRIEALTGEGALTYLNEQMKRLTDVAAALKAAPAELVDRVKALVEERRQLQNEVAQLRREAAMGGGAASEAKEIGGVKFLAQVVQGVPGKDMPGLIDEMKARVGSGAVLLISDTGGKAALAAGVTPDLTDRLSAVTLVKAAAEALGGRGGGGRPDMAQAGAADASQADAAIRAAEAVMGG</sequence>